<comment type="function">
    <text evidence="1">Forms oxaloacetate, a four-carbon dicarboxylic acid source for the tricarboxylic acid cycle.</text>
</comment>
<comment type="catalytic activity">
    <reaction evidence="1">
        <text>oxaloacetate + phosphate = phosphoenolpyruvate + hydrogencarbonate</text>
        <dbReference type="Rhea" id="RHEA:28370"/>
        <dbReference type="ChEBI" id="CHEBI:16452"/>
        <dbReference type="ChEBI" id="CHEBI:17544"/>
        <dbReference type="ChEBI" id="CHEBI:43474"/>
        <dbReference type="ChEBI" id="CHEBI:58702"/>
        <dbReference type="EC" id="4.1.1.31"/>
    </reaction>
</comment>
<comment type="cofactor">
    <cofactor evidence="1">
        <name>Mg(2+)</name>
        <dbReference type="ChEBI" id="CHEBI:18420"/>
    </cofactor>
</comment>
<comment type="similarity">
    <text evidence="1">Belongs to the PEPCase type 1 family.</text>
</comment>
<dbReference type="EC" id="4.1.1.31" evidence="1"/>
<dbReference type="EMBL" id="CP000026">
    <property type="protein sequence ID" value="AAV79720.1"/>
    <property type="molecule type" value="Genomic_DNA"/>
</dbReference>
<dbReference type="RefSeq" id="WP_001005555.1">
    <property type="nucleotide sequence ID" value="NC_006511.1"/>
</dbReference>
<dbReference type="SMR" id="Q5PK55"/>
<dbReference type="KEGG" id="spt:SPA3957"/>
<dbReference type="HOGENOM" id="CLU_006557_2_0_6"/>
<dbReference type="Proteomes" id="UP000008185">
    <property type="component" value="Chromosome"/>
</dbReference>
<dbReference type="GO" id="GO:0005829">
    <property type="term" value="C:cytosol"/>
    <property type="evidence" value="ECO:0007669"/>
    <property type="project" value="TreeGrafter"/>
</dbReference>
<dbReference type="GO" id="GO:0000287">
    <property type="term" value="F:magnesium ion binding"/>
    <property type="evidence" value="ECO:0007669"/>
    <property type="project" value="UniProtKB-UniRule"/>
</dbReference>
<dbReference type="GO" id="GO:0008964">
    <property type="term" value="F:phosphoenolpyruvate carboxylase activity"/>
    <property type="evidence" value="ECO:0007669"/>
    <property type="project" value="UniProtKB-UniRule"/>
</dbReference>
<dbReference type="GO" id="GO:0015977">
    <property type="term" value="P:carbon fixation"/>
    <property type="evidence" value="ECO:0007669"/>
    <property type="project" value="UniProtKB-UniRule"/>
</dbReference>
<dbReference type="GO" id="GO:0006107">
    <property type="term" value="P:oxaloacetate metabolic process"/>
    <property type="evidence" value="ECO:0007669"/>
    <property type="project" value="UniProtKB-UniRule"/>
</dbReference>
<dbReference type="GO" id="GO:0006099">
    <property type="term" value="P:tricarboxylic acid cycle"/>
    <property type="evidence" value="ECO:0007669"/>
    <property type="project" value="InterPro"/>
</dbReference>
<dbReference type="FunFam" id="1.20.1440.90:FF:000002">
    <property type="entry name" value="Phosphoenolpyruvate carboxylase"/>
    <property type="match status" value="1"/>
</dbReference>
<dbReference type="Gene3D" id="1.20.1440.90">
    <property type="entry name" value="Phosphoenolpyruvate/pyruvate domain"/>
    <property type="match status" value="1"/>
</dbReference>
<dbReference type="HAMAP" id="MF_00595">
    <property type="entry name" value="PEPcase_type1"/>
    <property type="match status" value="1"/>
</dbReference>
<dbReference type="InterPro" id="IPR021135">
    <property type="entry name" value="PEP_COase"/>
</dbReference>
<dbReference type="InterPro" id="IPR022805">
    <property type="entry name" value="PEP_COase_bac/pln-type"/>
</dbReference>
<dbReference type="InterPro" id="IPR018129">
    <property type="entry name" value="PEP_COase_Lys_AS"/>
</dbReference>
<dbReference type="InterPro" id="IPR033129">
    <property type="entry name" value="PEPCASE_His_AS"/>
</dbReference>
<dbReference type="InterPro" id="IPR015813">
    <property type="entry name" value="Pyrv/PenolPyrv_kinase-like_dom"/>
</dbReference>
<dbReference type="NCBIfam" id="NF000584">
    <property type="entry name" value="PRK00009.1"/>
    <property type="match status" value="1"/>
</dbReference>
<dbReference type="PANTHER" id="PTHR30523">
    <property type="entry name" value="PHOSPHOENOLPYRUVATE CARBOXYLASE"/>
    <property type="match status" value="1"/>
</dbReference>
<dbReference type="PANTHER" id="PTHR30523:SF6">
    <property type="entry name" value="PHOSPHOENOLPYRUVATE CARBOXYLASE"/>
    <property type="match status" value="1"/>
</dbReference>
<dbReference type="Pfam" id="PF00311">
    <property type="entry name" value="PEPcase"/>
    <property type="match status" value="1"/>
</dbReference>
<dbReference type="PRINTS" id="PR00150">
    <property type="entry name" value="PEPCARBXLASE"/>
</dbReference>
<dbReference type="SUPFAM" id="SSF51621">
    <property type="entry name" value="Phosphoenolpyruvate/pyruvate domain"/>
    <property type="match status" value="1"/>
</dbReference>
<dbReference type="PROSITE" id="PS00781">
    <property type="entry name" value="PEPCASE_1"/>
    <property type="match status" value="1"/>
</dbReference>
<dbReference type="PROSITE" id="PS00393">
    <property type="entry name" value="PEPCASE_2"/>
    <property type="match status" value="1"/>
</dbReference>
<evidence type="ECO:0000255" key="1">
    <source>
        <dbReference type="HAMAP-Rule" id="MF_00595"/>
    </source>
</evidence>
<keyword id="KW-0120">Carbon dioxide fixation</keyword>
<keyword id="KW-0456">Lyase</keyword>
<keyword id="KW-0460">Magnesium</keyword>
<proteinExistence type="inferred from homology"/>
<protein>
    <recommendedName>
        <fullName evidence="1">Phosphoenolpyruvate carboxylase</fullName>
        <shortName evidence="1">PEPC</shortName>
        <shortName evidence="1">PEPCase</shortName>
        <ecNumber evidence="1">4.1.1.31</ecNumber>
    </recommendedName>
</protein>
<name>CAPP_SALPA</name>
<accession>Q5PK55</accession>
<sequence length="883" mass="99033">MNEQYSALRSNVSMLGKVLGETIKDALGEHILDRVETIRKLSKSSRAGNEANRRELLTTLQNLSNDELLPVARAFSQFLNLANTAEQYHSISPKGEAASNPEVIARTLRKLKNQPDLNDATIKKAVESLSLELVLTAHPTEITRRTLIHKMGEINNCLKQLDNTDIADYERHQVMRRLRQLIAQSWHTDEIRKQRPSPVDEAKWGFAVVENSLWQGVPNYLRELNEQLEENLGYKLPVDFVPVRFTSWMGGDRDGNPNVTADITRHVLLLSRWKATDLFLKDIHVLVSELSMVDATPELLALVGEEGASEPYRYLMKKLRARLMATQSWLEARLKGEELPKPAGLLTQNEQLWEPLYACYQSLQACGMGIIANGELLDTLRRVKCFGVPLVRIDIRQESTRHTEALGEITRYLGIGDYESWSEADKQAFLIRELNSKRPLLPRNWEPSNDTREVLETCKVIAEAPKGSIAAYVISMAKTPSDVLAVHLLLKEAGIGFAMPVAPLFETLDDLNNADDVMTQLLNIDWYRGLIQGKQMVMIGYSDSAKDAGVMAASWAQYQAQDALIKTCEKAGIELTLFHGRGGSIGRGGAPAHAALLSQPPGSLEGGLRVTEQGEMIRFKYGLPEVTVSSLSLYTSAILEANLLPPPEPKDSWRHIMDELSVISCETYRGYVRENKDFVPYFRSATPEQELGKLPLGSRPAKRRPTGGVESLRAIPWIFAWTQNRLMLPAWLGAGTALQKVVEDGKQSELEAMCRDWPFFSTRLGMLEMVFSKADLWLADYYDQRLVAKTLWPLGKELRDLLEEDIKVVLAIANDSHLMADLPWIAESIQLRNVYTDPLNVLQAELLYRSRLTEEQGKSPDPRVEQALMVTIAGVAAGMRNTG</sequence>
<reference key="1">
    <citation type="journal article" date="2004" name="Nat. Genet.">
        <title>Comparison of genome degradation in Paratyphi A and Typhi, human-restricted serovars of Salmonella enterica that cause typhoid.</title>
        <authorList>
            <person name="McClelland M."/>
            <person name="Sanderson K.E."/>
            <person name="Clifton S.W."/>
            <person name="Latreille P."/>
            <person name="Porwollik S."/>
            <person name="Sabo A."/>
            <person name="Meyer R."/>
            <person name="Bieri T."/>
            <person name="Ozersky P."/>
            <person name="McLellan M."/>
            <person name="Harkins C.R."/>
            <person name="Wang C."/>
            <person name="Nguyen C."/>
            <person name="Berghoff A."/>
            <person name="Elliott G."/>
            <person name="Kohlberg S."/>
            <person name="Strong C."/>
            <person name="Du F."/>
            <person name="Carter J."/>
            <person name="Kremizki C."/>
            <person name="Layman D."/>
            <person name="Leonard S."/>
            <person name="Sun H."/>
            <person name="Fulton L."/>
            <person name="Nash W."/>
            <person name="Miner T."/>
            <person name="Minx P."/>
            <person name="Delehaunty K."/>
            <person name="Fronick C."/>
            <person name="Magrini V."/>
            <person name="Nhan M."/>
            <person name="Warren W."/>
            <person name="Florea L."/>
            <person name="Spieth J."/>
            <person name="Wilson R.K."/>
        </authorList>
    </citation>
    <scope>NUCLEOTIDE SEQUENCE [LARGE SCALE GENOMIC DNA]</scope>
    <source>
        <strain>ATCC 9150 / SARB42</strain>
    </source>
</reference>
<feature type="chain" id="PRO_0000166620" description="Phosphoenolpyruvate carboxylase">
    <location>
        <begin position="1"/>
        <end position="883"/>
    </location>
</feature>
<feature type="active site" evidence="1">
    <location>
        <position position="138"/>
    </location>
</feature>
<feature type="active site" evidence="1">
    <location>
        <position position="546"/>
    </location>
</feature>
<gene>
    <name evidence="1" type="primary">ppc</name>
    <name type="ordered locus">SPA3957</name>
</gene>
<organism>
    <name type="scientific">Salmonella paratyphi A (strain ATCC 9150 / SARB42)</name>
    <dbReference type="NCBI Taxonomy" id="295319"/>
    <lineage>
        <taxon>Bacteria</taxon>
        <taxon>Pseudomonadati</taxon>
        <taxon>Pseudomonadota</taxon>
        <taxon>Gammaproteobacteria</taxon>
        <taxon>Enterobacterales</taxon>
        <taxon>Enterobacteriaceae</taxon>
        <taxon>Salmonella</taxon>
    </lineage>
</organism>